<accession>B4F2D6</accession>
<sequence>MQALQSIIDNAFEQRAEITPDNVEPQVRDAINNVIAQLDSGKLRVAEKINGQWVTHQWLKKAVLLSFRISHNQVIDGSESRYFDKVPMKFANYDQARFEKEGFRVVPPAAVRQGAYIARNTVLMPSYVNIGAYVDEGSMVDTWATVGSCAQIGKNVHLSGGVGIGGVLEPLQANPTIIEDNCFIGARSEIVEGVIVEEGSVISMGVYIGQSTKIYDRETGEIHYGRVPAGSVVVSGNLPSKDGRYSLYCAVIVKKVDAKTRGKVGINELLRTID</sequence>
<comment type="catalytic activity">
    <reaction evidence="1">
        <text>(S)-2,3,4,5-tetrahydrodipicolinate + succinyl-CoA + H2O = (S)-2-succinylamino-6-oxoheptanedioate + CoA</text>
        <dbReference type="Rhea" id="RHEA:17325"/>
        <dbReference type="ChEBI" id="CHEBI:15377"/>
        <dbReference type="ChEBI" id="CHEBI:15685"/>
        <dbReference type="ChEBI" id="CHEBI:16845"/>
        <dbReference type="ChEBI" id="CHEBI:57287"/>
        <dbReference type="ChEBI" id="CHEBI:57292"/>
        <dbReference type="EC" id="2.3.1.117"/>
    </reaction>
</comment>
<comment type="pathway">
    <text evidence="1">Amino-acid biosynthesis; L-lysine biosynthesis via DAP pathway; LL-2,6-diaminopimelate from (S)-tetrahydrodipicolinate (succinylase route): step 1/3.</text>
</comment>
<comment type="subcellular location">
    <subcellularLocation>
        <location evidence="1">Cytoplasm</location>
    </subcellularLocation>
</comment>
<comment type="similarity">
    <text evidence="1">Belongs to the transferase hexapeptide repeat family.</text>
</comment>
<name>DAPD_PROMH</name>
<reference key="1">
    <citation type="journal article" date="2008" name="J. Bacteriol.">
        <title>Complete genome sequence of uropathogenic Proteus mirabilis, a master of both adherence and motility.</title>
        <authorList>
            <person name="Pearson M.M."/>
            <person name="Sebaihia M."/>
            <person name="Churcher C."/>
            <person name="Quail M.A."/>
            <person name="Seshasayee A.S."/>
            <person name="Luscombe N.M."/>
            <person name="Abdellah Z."/>
            <person name="Arrosmith C."/>
            <person name="Atkin B."/>
            <person name="Chillingworth T."/>
            <person name="Hauser H."/>
            <person name="Jagels K."/>
            <person name="Moule S."/>
            <person name="Mungall K."/>
            <person name="Norbertczak H."/>
            <person name="Rabbinowitsch E."/>
            <person name="Walker D."/>
            <person name="Whithead S."/>
            <person name="Thomson N.R."/>
            <person name="Rather P.N."/>
            <person name="Parkhill J."/>
            <person name="Mobley H.L.T."/>
        </authorList>
    </citation>
    <scope>NUCLEOTIDE SEQUENCE [LARGE SCALE GENOMIC DNA]</scope>
    <source>
        <strain>HI4320</strain>
    </source>
</reference>
<gene>
    <name evidence="1" type="primary">dapD</name>
    <name type="ordered locus">PMI2288</name>
</gene>
<keyword id="KW-0012">Acyltransferase</keyword>
<keyword id="KW-0028">Amino-acid biosynthesis</keyword>
<keyword id="KW-0963">Cytoplasm</keyword>
<keyword id="KW-0220">Diaminopimelate biosynthesis</keyword>
<keyword id="KW-0457">Lysine biosynthesis</keyword>
<keyword id="KW-1185">Reference proteome</keyword>
<keyword id="KW-0677">Repeat</keyword>
<keyword id="KW-0808">Transferase</keyword>
<feature type="chain" id="PRO_1000134058" description="2,3,4,5-tetrahydropyridine-2,6-dicarboxylate N-succinyltransferase">
    <location>
        <begin position="1"/>
        <end position="274"/>
    </location>
</feature>
<organism>
    <name type="scientific">Proteus mirabilis (strain HI4320)</name>
    <dbReference type="NCBI Taxonomy" id="529507"/>
    <lineage>
        <taxon>Bacteria</taxon>
        <taxon>Pseudomonadati</taxon>
        <taxon>Pseudomonadota</taxon>
        <taxon>Gammaproteobacteria</taxon>
        <taxon>Enterobacterales</taxon>
        <taxon>Morganellaceae</taxon>
        <taxon>Proteus</taxon>
    </lineage>
</organism>
<evidence type="ECO:0000255" key="1">
    <source>
        <dbReference type="HAMAP-Rule" id="MF_00811"/>
    </source>
</evidence>
<protein>
    <recommendedName>
        <fullName evidence="1">2,3,4,5-tetrahydropyridine-2,6-dicarboxylate N-succinyltransferase</fullName>
        <ecNumber evidence="1">2.3.1.117</ecNumber>
    </recommendedName>
    <alternativeName>
        <fullName evidence="1">Tetrahydrodipicolinate N-succinyltransferase</fullName>
        <shortName evidence="1">THP succinyltransferase</shortName>
        <shortName evidence="1">Tetrahydropicolinate succinylase</shortName>
    </alternativeName>
</protein>
<dbReference type="EC" id="2.3.1.117" evidence="1"/>
<dbReference type="EMBL" id="AM942759">
    <property type="protein sequence ID" value="CAR44525.1"/>
    <property type="molecule type" value="Genomic_DNA"/>
</dbReference>
<dbReference type="RefSeq" id="WP_004245480.1">
    <property type="nucleotide sequence ID" value="NC_010554.1"/>
</dbReference>
<dbReference type="SMR" id="B4F2D6"/>
<dbReference type="EnsemblBacteria" id="CAR44525">
    <property type="protein sequence ID" value="CAR44525"/>
    <property type="gene ID" value="PMI2288"/>
</dbReference>
<dbReference type="GeneID" id="6800126"/>
<dbReference type="KEGG" id="pmr:PMI2288"/>
<dbReference type="eggNOG" id="COG2171">
    <property type="taxonomic scope" value="Bacteria"/>
</dbReference>
<dbReference type="HOGENOM" id="CLU_050859_0_1_6"/>
<dbReference type="UniPathway" id="UPA00034">
    <property type="reaction ID" value="UER00019"/>
</dbReference>
<dbReference type="Proteomes" id="UP000008319">
    <property type="component" value="Chromosome"/>
</dbReference>
<dbReference type="GO" id="GO:0005737">
    <property type="term" value="C:cytoplasm"/>
    <property type="evidence" value="ECO:0007669"/>
    <property type="project" value="UniProtKB-SubCell"/>
</dbReference>
<dbReference type="GO" id="GO:0008666">
    <property type="term" value="F:2,3,4,5-tetrahydropyridine-2,6-dicarboxylate N-succinyltransferase activity"/>
    <property type="evidence" value="ECO:0007669"/>
    <property type="project" value="UniProtKB-UniRule"/>
</dbReference>
<dbReference type="GO" id="GO:0016779">
    <property type="term" value="F:nucleotidyltransferase activity"/>
    <property type="evidence" value="ECO:0007669"/>
    <property type="project" value="TreeGrafter"/>
</dbReference>
<dbReference type="GO" id="GO:0019877">
    <property type="term" value="P:diaminopimelate biosynthetic process"/>
    <property type="evidence" value="ECO:0007669"/>
    <property type="project" value="UniProtKB-UniRule"/>
</dbReference>
<dbReference type="GO" id="GO:0009089">
    <property type="term" value="P:lysine biosynthetic process via diaminopimelate"/>
    <property type="evidence" value="ECO:0007669"/>
    <property type="project" value="UniProtKB-UniRule"/>
</dbReference>
<dbReference type="CDD" id="cd03350">
    <property type="entry name" value="LbH_THP_succinylT"/>
    <property type="match status" value="1"/>
</dbReference>
<dbReference type="FunFam" id="2.160.10.10:FF:000004">
    <property type="entry name" value="2,3,4,5-tetrahydropyridine-2,6-dicarboxylate N-succinyltransferase"/>
    <property type="match status" value="1"/>
</dbReference>
<dbReference type="Gene3D" id="2.160.10.10">
    <property type="entry name" value="Hexapeptide repeat proteins"/>
    <property type="match status" value="1"/>
</dbReference>
<dbReference type="Gene3D" id="1.10.166.10">
    <property type="entry name" value="Tetrahydrodipicolinate-N-succinyltransferase, N-terminal domain"/>
    <property type="match status" value="1"/>
</dbReference>
<dbReference type="HAMAP" id="MF_00811">
    <property type="entry name" value="DapD"/>
    <property type="match status" value="1"/>
</dbReference>
<dbReference type="InterPro" id="IPR005664">
    <property type="entry name" value="DapD_Trfase_Hexpep_rpt_fam"/>
</dbReference>
<dbReference type="InterPro" id="IPR001451">
    <property type="entry name" value="Hexapep"/>
</dbReference>
<dbReference type="InterPro" id="IPR018357">
    <property type="entry name" value="Hexapep_transf_CS"/>
</dbReference>
<dbReference type="InterPro" id="IPR023180">
    <property type="entry name" value="THP_succinylTrfase_dom1"/>
</dbReference>
<dbReference type="InterPro" id="IPR037133">
    <property type="entry name" value="THP_succinylTrfase_N_sf"/>
</dbReference>
<dbReference type="InterPro" id="IPR011004">
    <property type="entry name" value="Trimer_LpxA-like_sf"/>
</dbReference>
<dbReference type="NCBIfam" id="TIGR00965">
    <property type="entry name" value="dapD"/>
    <property type="match status" value="1"/>
</dbReference>
<dbReference type="NCBIfam" id="NF008808">
    <property type="entry name" value="PRK11830.1"/>
    <property type="match status" value="1"/>
</dbReference>
<dbReference type="PANTHER" id="PTHR19136:SF52">
    <property type="entry name" value="2,3,4,5-TETRAHYDROPYRIDINE-2,6-DICARBOXYLATE N-SUCCINYLTRANSFERASE"/>
    <property type="match status" value="1"/>
</dbReference>
<dbReference type="PANTHER" id="PTHR19136">
    <property type="entry name" value="MOLYBDENUM COFACTOR GUANYLYLTRANSFERASE"/>
    <property type="match status" value="1"/>
</dbReference>
<dbReference type="Pfam" id="PF14602">
    <property type="entry name" value="Hexapep_2"/>
    <property type="match status" value="1"/>
</dbReference>
<dbReference type="Pfam" id="PF14805">
    <property type="entry name" value="THDPS_N_2"/>
    <property type="match status" value="1"/>
</dbReference>
<dbReference type="SUPFAM" id="SSF51161">
    <property type="entry name" value="Trimeric LpxA-like enzymes"/>
    <property type="match status" value="1"/>
</dbReference>
<dbReference type="PROSITE" id="PS00101">
    <property type="entry name" value="HEXAPEP_TRANSFERASES"/>
    <property type="match status" value="1"/>
</dbReference>
<proteinExistence type="inferred from homology"/>